<accession>Q8KTA3</accession>
<keyword id="KW-0963">Cytoplasm</keyword>
<keyword id="KW-0251">Elongation factor</keyword>
<keyword id="KW-0342">GTP-binding</keyword>
<keyword id="KW-0378">Hydrolase</keyword>
<keyword id="KW-0460">Magnesium</keyword>
<keyword id="KW-0479">Metal-binding</keyword>
<keyword id="KW-0547">Nucleotide-binding</keyword>
<keyword id="KW-0648">Protein biosynthesis</keyword>
<sequence length="394" mass="42905">MAKAKFERTKPHVNIGTIGHVDHGKTSLTAAITIVLAKTGGAQATAYDQIDAAPEEKERGITISTAHVEYETKNRHYAHVDCPGHADYVKNMITGAAQMDGAILVVSAADGPMPQTREHILLAKQVGVPAMVVFLNKVDMVDDPDLLELVEMEVRELLSKYGFPGDEIPIIKGSALQALEGKPEGEEAINELMDAVDSYIPQPVELRINPFLMPIEDVFSISGRGTVVTGRVESGIIKVGDEIEIVGLKDTQKTTCTGVEMFRKLLDEGQAGDNVGILLRGTKREEVERGQVLAKPGSIKPHDKFEAEVYVLSKEEGGRHTPFTNDYRPQFYFRTTDVTGTIKLPADKQMVMPGDNATFTVELIKPIAMQEGLKFSIREGGRTVGAGVVTKINN</sequence>
<name>EFTU_RICRH</name>
<evidence type="ECO:0000250" key="1"/>
<evidence type="ECO:0000255" key="2">
    <source>
        <dbReference type="HAMAP-Rule" id="MF_00118"/>
    </source>
</evidence>
<dbReference type="EC" id="3.6.5.3" evidence="2"/>
<dbReference type="EMBL" id="AF502182">
    <property type="protein sequence ID" value="AAM90936.1"/>
    <property type="molecule type" value="Genomic_DNA"/>
</dbReference>
<dbReference type="SMR" id="Q8KTA3"/>
<dbReference type="GO" id="GO:0005737">
    <property type="term" value="C:cytoplasm"/>
    <property type="evidence" value="ECO:0007669"/>
    <property type="project" value="UniProtKB-SubCell"/>
</dbReference>
<dbReference type="GO" id="GO:0005525">
    <property type="term" value="F:GTP binding"/>
    <property type="evidence" value="ECO:0007669"/>
    <property type="project" value="UniProtKB-UniRule"/>
</dbReference>
<dbReference type="GO" id="GO:0003924">
    <property type="term" value="F:GTPase activity"/>
    <property type="evidence" value="ECO:0007669"/>
    <property type="project" value="InterPro"/>
</dbReference>
<dbReference type="GO" id="GO:0097216">
    <property type="term" value="F:guanosine tetraphosphate binding"/>
    <property type="evidence" value="ECO:0007669"/>
    <property type="project" value="UniProtKB-ARBA"/>
</dbReference>
<dbReference type="GO" id="GO:0003746">
    <property type="term" value="F:translation elongation factor activity"/>
    <property type="evidence" value="ECO:0007669"/>
    <property type="project" value="UniProtKB-UniRule"/>
</dbReference>
<dbReference type="CDD" id="cd01884">
    <property type="entry name" value="EF_Tu"/>
    <property type="match status" value="1"/>
</dbReference>
<dbReference type="CDD" id="cd03697">
    <property type="entry name" value="EFTU_II"/>
    <property type="match status" value="1"/>
</dbReference>
<dbReference type="CDD" id="cd03707">
    <property type="entry name" value="EFTU_III"/>
    <property type="match status" value="1"/>
</dbReference>
<dbReference type="FunFam" id="2.40.30.10:FF:000001">
    <property type="entry name" value="Elongation factor Tu"/>
    <property type="match status" value="1"/>
</dbReference>
<dbReference type="FunFam" id="3.40.50.300:FF:000003">
    <property type="entry name" value="Elongation factor Tu"/>
    <property type="match status" value="1"/>
</dbReference>
<dbReference type="Gene3D" id="3.40.50.300">
    <property type="entry name" value="P-loop containing nucleotide triphosphate hydrolases"/>
    <property type="match status" value="1"/>
</dbReference>
<dbReference type="Gene3D" id="2.40.30.10">
    <property type="entry name" value="Translation factors"/>
    <property type="match status" value="2"/>
</dbReference>
<dbReference type="HAMAP" id="MF_00118_B">
    <property type="entry name" value="EF_Tu_B"/>
    <property type="match status" value="1"/>
</dbReference>
<dbReference type="InterPro" id="IPR041709">
    <property type="entry name" value="EF-Tu_GTP-bd"/>
</dbReference>
<dbReference type="InterPro" id="IPR050055">
    <property type="entry name" value="EF-Tu_GTPase"/>
</dbReference>
<dbReference type="InterPro" id="IPR004161">
    <property type="entry name" value="EFTu-like_2"/>
</dbReference>
<dbReference type="InterPro" id="IPR033720">
    <property type="entry name" value="EFTU_2"/>
</dbReference>
<dbReference type="InterPro" id="IPR031157">
    <property type="entry name" value="G_TR_CS"/>
</dbReference>
<dbReference type="InterPro" id="IPR027417">
    <property type="entry name" value="P-loop_NTPase"/>
</dbReference>
<dbReference type="InterPro" id="IPR005225">
    <property type="entry name" value="Small_GTP-bd"/>
</dbReference>
<dbReference type="InterPro" id="IPR000795">
    <property type="entry name" value="T_Tr_GTP-bd_dom"/>
</dbReference>
<dbReference type="InterPro" id="IPR009000">
    <property type="entry name" value="Transl_B-barrel_sf"/>
</dbReference>
<dbReference type="InterPro" id="IPR009001">
    <property type="entry name" value="Transl_elong_EF1A/Init_IF2_C"/>
</dbReference>
<dbReference type="InterPro" id="IPR004541">
    <property type="entry name" value="Transl_elong_EFTu/EF1A_bac/org"/>
</dbReference>
<dbReference type="InterPro" id="IPR004160">
    <property type="entry name" value="Transl_elong_EFTu/EF1A_C"/>
</dbReference>
<dbReference type="NCBIfam" id="TIGR00485">
    <property type="entry name" value="EF-Tu"/>
    <property type="match status" value="1"/>
</dbReference>
<dbReference type="NCBIfam" id="NF000766">
    <property type="entry name" value="PRK00049.1"/>
    <property type="match status" value="1"/>
</dbReference>
<dbReference type="NCBIfam" id="NF009372">
    <property type="entry name" value="PRK12735.1"/>
    <property type="match status" value="1"/>
</dbReference>
<dbReference type="NCBIfam" id="NF009373">
    <property type="entry name" value="PRK12736.1"/>
    <property type="match status" value="1"/>
</dbReference>
<dbReference type="NCBIfam" id="TIGR00231">
    <property type="entry name" value="small_GTP"/>
    <property type="match status" value="1"/>
</dbReference>
<dbReference type="PANTHER" id="PTHR43721:SF22">
    <property type="entry name" value="ELONGATION FACTOR TU, MITOCHONDRIAL"/>
    <property type="match status" value="1"/>
</dbReference>
<dbReference type="PANTHER" id="PTHR43721">
    <property type="entry name" value="ELONGATION FACTOR TU-RELATED"/>
    <property type="match status" value="1"/>
</dbReference>
<dbReference type="Pfam" id="PF00009">
    <property type="entry name" value="GTP_EFTU"/>
    <property type="match status" value="1"/>
</dbReference>
<dbReference type="Pfam" id="PF03144">
    <property type="entry name" value="GTP_EFTU_D2"/>
    <property type="match status" value="1"/>
</dbReference>
<dbReference type="Pfam" id="PF03143">
    <property type="entry name" value="GTP_EFTU_D3"/>
    <property type="match status" value="1"/>
</dbReference>
<dbReference type="PRINTS" id="PR00315">
    <property type="entry name" value="ELONGATNFCT"/>
</dbReference>
<dbReference type="SUPFAM" id="SSF50465">
    <property type="entry name" value="EF-Tu/eEF-1alpha/eIF2-gamma C-terminal domain"/>
    <property type="match status" value="1"/>
</dbReference>
<dbReference type="SUPFAM" id="SSF52540">
    <property type="entry name" value="P-loop containing nucleoside triphosphate hydrolases"/>
    <property type="match status" value="1"/>
</dbReference>
<dbReference type="SUPFAM" id="SSF50447">
    <property type="entry name" value="Translation proteins"/>
    <property type="match status" value="1"/>
</dbReference>
<dbReference type="PROSITE" id="PS00301">
    <property type="entry name" value="G_TR_1"/>
    <property type="match status" value="1"/>
</dbReference>
<dbReference type="PROSITE" id="PS51722">
    <property type="entry name" value="G_TR_2"/>
    <property type="match status" value="1"/>
</dbReference>
<proteinExistence type="inferred from homology"/>
<organism>
    <name type="scientific">Rickettsia rhipicephali</name>
    <dbReference type="NCBI Taxonomy" id="33992"/>
    <lineage>
        <taxon>Bacteria</taxon>
        <taxon>Pseudomonadati</taxon>
        <taxon>Pseudomonadota</taxon>
        <taxon>Alphaproteobacteria</taxon>
        <taxon>Rickettsiales</taxon>
        <taxon>Rickettsiaceae</taxon>
        <taxon>Rickettsieae</taxon>
        <taxon>Rickettsia</taxon>
        <taxon>spotted fever group</taxon>
    </lineage>
</organism>
<comment type="function">
    <text evidence="2">GTP hydrolase that promotes the GTP-dependent binding of aminoacyl-tRNA to the A-site of ribosomes during protein biosynthesis.</text>
</comment>
<comment type="catalytic activity">
    <reaction evidence="2">
        <text>GTP + H2O = GDP + phosphate + H(+)</text>
        <dbReference type="Rhea" id="RHEA:19669"/>
        <dbReference type="ChEBI" id="CHEBI:15377"/>
        <dbReference type="ChEBI" id="CHEBI:15378"/>
        <dbReference type="ChEBI" id="CHEBI:37565"/>
        <dbReference type="ChEBI" id="CHEBI:43474"/>
        <dbReference type="ChEBI" id="CHEBI:58189"/>
        <dbReference type="EC" id="3.6.5.3"/>
    </reaction>
    <physiologicalReaction direction="left-to-right" evidence="2">
        <dbReference type="Rhea" id="RHEA:19670"/>
    </physiologicalReaction>
</comment>
<comment type="subunit">
    <text evidence="2">Monomer.</text>
</comment>
<comment type="subcellular location">
    <subcellularLocation>
        <location evidence="2">Cytoplasm</location>
    </subcellularLocation>
</comment>
<comment type="similarity">
    <text evidence="2">Belongs to the TRAFAC class translation factor GTPase superfamily. Classic translation factor GTPase family. EF-Tu/EF-1A subfamily.</text>
</comment>
<gene>
    <name evidence="2" type="primary">tuf</name>
</gene>
<reference key="1">
    <citation type="journal article" date="2002" name="Mol. Biol. Evol.">
        <title>Proliferation and deterioration of Rickettsia palindromic elements.</title>
        <authorList>
            <person name="Amiri H."/>
            <person name="Alsmark C.M."/>
            <person name="Andersson S.G.E."/>
        </authorList>
    </citation>
    <scope>NUCLEOTIDE SEQUENCE [GENOMIC DNA]</scope>
</reference>
<feature type="chain" id="PRO_0000091379" description="Elongation factor Tu">
    <location>
        <begin position="1"/>
        <end position="394"/>
    </location>
</feature>
<feature type="domain" description="tr-type G">
    <location>
        <begin position="10"/>
        <end position="204"/>
    </location>
</feature>
<feature type="region of interest" description="G1" evidence="1">
    <location>
        <begin position="19"/>
        <end position="26"/>
    </location>
</feature>
<feature type="region of interest" description="G2" evidence="1">
    <location>
        <begin position="60"/>
        <end position="64"/>
    </location>
</feature>
<feature type="region of interest" description="G3" evidence="1">
    <location>
        <begin position="81"/>
        <end position="84"/>
    </location>
</feature>
<feature type="region of interest" description="G4" evidence="1">
    <location>
        <begin position="136"/>
        <end position="139"/>
    </location>
</feature>
<feature type="region of interest" description="G5" evidence="1">
    <location>
        <begin position="174"/>
        <end position="176"/>
    </location>
</feature>
<feature type="binding site" evidence="2">
    <location>
        <begin position="19"/>
        <end position="26"/>
    </location>
    <ligand>
        <name>GTP</name>
        <dbReference type="ChEBI" id="CHEBI:37565"/>
    </ligand>
</feature>
<feature type="binding site" evidence="2">
    <location>
        <position position="26"/>
    </location>
    <ligand>
        <name>Mg(2+)</name>
        <dbReference type="ChEBI" id="CHEBI:18420"/>
    </ligand>
</feature>
<feature type="binding site" evidence="2">
    <location>
        <begin position="81"/>
        <end position="85"/>
    </location>
    <ligand>
        <name>GTP</name>
        <dbReference type="ChEBI" id="CHEBI:37565"/>
    </ligand>
</feature>
<feature type="binding site" evidence="2">
    <location>
        <begin position="136"/>
        <end position="139"/>
    </location>
    <ligand>
        <name>GTP</name>
        <dbReference type="ChEBI" id="CHEBI:37565"/>
    </ligand>
</feature>
<protein>
    <recommendedName>
        <fullName evidence="2">Elongation factor Tu</fullName>
        <shortName evidence="2">EF-Tu</shortName>
        <ecNumber evidence="2">3.6.5.3</ecNumber>
    </recommendedName>
</protein>